<gene>
    <name type="ordered locus">MJ1153</name>
</gene>
<accession>Q58553</accession>
<protein>
    <recommendedName>
        <fullName>Uncharacterized protein MJ1153</fullName>
    </recommendedName>
</protein>
<name>Y1153_METJA</name>
<organism>
    <name type="scientific">Methanocaldococcus jannaschii (strain ATCC 43067 / DSM 2661 / JAL-1 / JCM 10045 / NBRC 100440)</name>
    <name type="common">Methanococcus jannaschii</name>
    <dbReference type="NCBI Taxonomy" id="243232"/>
    <lineage>
        <taxon>Archaea</taxon>
        <taxon>Methanobacteriati</taxon>
        <taxon>Methanobacteriota</taxon>
        <taxon>Methanomada group</taxon>
        <taxon>Methanococci</taxon>
        <taxon>Methanococcales</taxon>
        <taxon>Methanocaldococcaceae</taxon>
        <taxon>Methanocaldococcus</taxon>
    </lineage>
</organism>
<reference key="1">
    <citation type="journal article" date="1996" name="Science">
        <title>Complete genome sequence of the methanogenic archaeon, Methanococcus jannaschii.</title>
        <authorList>
            <person name="Bult C.J."/>
            <person name="White O."/>
            <person name="Olsen G.J."/>
            <person name="Zhou L."/>
            <person name="Fleischmann R.D."/>
            <person name="Sutton G.G."/>
            <person name="Blake J.A."/>
            <person name="FitzGerald L.M."/>
            <person name="Clayton R.A."/>
            <person name="Gocayne J.D."/>
            <person name="Kerlavage A.R."/>
            <person name="Dougherty B.A."/>
            <person name="Tomb J.-F."/>
            <person name="Adams M.D."/>
            <person name="Reich C.I."/>
            <person name="Overbeek R."/>
            <person name="Kirkness E.F."/>
            <person name="Weinstock K.G."/>
            <person name="Merrick J.M."/>
            <person name="Glodek A."/>
            <person name="Scott J.L."/>
            <person name="Geoghagen N.S.M."/>
            <person name="Weidman J.F."/>
            <person name="Fuhrmann J.L."/>
            <person name="Nguyen D."/>
            <person name="Utterback T.R."/>
            <person name="Kelley J.M."/>
            <person name="Peterson J.D."/>
            <person name="Sadow P.W."/>
            <person name="Hanna M.C."/>
            <person name="Cotton M.D."/>
            <person name="Roberts K.M."/>
            <person name="Hurst M.A."/>
            <person name="Kaine B.P."/>
            <person name="Borodovsky M."/>
            <person name="Klenk H.-P."/>
            <person name="Fraser C.M."/>
            <person name="Smith H.O."/>
            <person name="Woese C.R."/>
            <person name="Venter J.C."/>
        </authorList>
    </citation>
    <scope>NUCLEOTIDE SEQUENCE [LARGE SCALE GENOMIC DNA]</scope>
    <source>
        <strain>ATCC 43067 / DSM 2661 / JAL-1 / JCM 10045 / NBRC 100440</strain>
    </source>
</reference>
<dbReference type="EMBL" id="L77117">
    <property type="protein sequence ID" value="AAB99159.1"/>
    <property type="molecule type" value="Genomic_DNA"/>
</dbReference>
<dbReference type="PIR" id="H64443">
    <property type="entry name" value="H64443"/>
</dbReference>
<dbReference type="SMR" id="Q58553"/>
<dbReference type="STRING" id="243232.MJ_1153"/>
<dbReference type="PaxDb" id="243232-MJ_1153"/>
<dbReference type="EnsemblBacteria" id="AAB99159">
    <property type="protein sequence ID" value="AAB99159"/>
    <property type="gene ID" value="MJ_1153"/>
</dbReference>
<dbReference type="KEGG" id="mja:MJ_1153"/>
<dbReference type="HOGENOM" id="CLU_2893257_0_0_2"/>
<dbReference type="InParanoid" id="Q58553"/>
<dbReference type="Proteomes" id="UP000000805">
    <property type="component" value="Chromosome"/>
</dbReference>
<sequence>MKENILKQKWAKIMKKHKYKKPKWLIKAEQKAEKMTLEEEKEWIEKAIRVYKDKGIDGLFEI</sequence>
<keyword id="KW-1185">Reference proteome</keyword>
<proteinExistence type="predicted"/>
<feature type="chain" id="PRO_0000107191" description="Uncharacterized protein MJ1153">
    <location>
        <begin position="1"/>
        <end position="62"/>
    </location>
</feature>